<dbReference type="EC" id="2.1.2.11" evidence="1"/>
<dbReference type="EMBL" id="CP001177">
    <property type="protein sequence ID" value="ACJ78349.1"/>
    <property type="molecule type" value="Genomic_DNA"/>
</dbReference>
<dbReference type="SMR" id="B7HL53"/>
<dbReference type="KEGG" id="bcr:BCAH187_A1706"/>
<dbReference type="HOGENOM" id="CLU_036645_1_0_9"/>
<dbReference type="UniPathway" id="UPA00028">
    <property type="reaction ID" value="UER00003"/>
</dbReference>
<dbReference type="Proteomes" id="UP000002214">
    <property type="component" value="Chromosome"/>
</dbReference>
<dbReference type="GO" id="GO:0005737">
    <property type="term" value="C:cytoplasm"/>
    <property type="evidence" value="ECO:0007669"/>
    <property type="project" value="UniProtKB-SubCell"/>
</dbReference>
<dbReference type="GO" id="GO:0003864">
    <property type="term" value="F:3-methyl-2-oxobutanoate hydroxymethyltransferase activity"/>
    <property type="evidence" value="ECO:0007669"/>
    <property type="project" value="UniProtKB-UniRule"/>
</dbReference>
<dbReference type="GO" id="GO:0000287">
    <property type="term" value="F:magnesium ion binding"/>
    <property type="evidence" value="ECO:0007669"/>
    <property type="project" value="TreeGrafter"/>
</dbReference>
<dbReference type="GO" id="GO:0015940">
    <property type="term" value="P:pantothenate biosynthetic process"/>
    <property type="evidence" value="ECO:0007669"/>
    <property type="project" value="UniProtKB-UniRule"/>
</dbReference>
<dbReference type="CDD" id="cd06557">
    <property type="entry name" value="KPHMT-like"/>
    <property type="match status" value="1"/>
</dbReference>
<dbReference type="FunFam" id="3.20.20.60:FF:000003">
    <property type="entry name" value="3-methyl-2-oxobutanoate hydroxymethyltransferase"/>
    <property type="match status" value="1"/>
</dbReference>
<dbReference type="Gene3D" id="3.20.20.60">
    <property type="entry name" value="Phosphoenolpyruvate-binding domains"/>
    <property type="match status" value="1"/>
</dbReference>
<dbReference type="HAMAP" id="MF_00156">
    <property type="entry name" value="PanB"/>
    <property type="match status" value="1"/>
</dbReference>
<dbReference type="InterPro" id="IPR003700">
    <property type="entry name" value="Pantoate_hydroxy_MeTrfase"/>
</dbReference>
<dbReference type="InterPro" id="IPR015813">
    <property type="entry name" value="Pyrv/PenolPyrv_kinase-like_dom"/>
</dbReference>
<dbReference type="InterPro" id="IPR040442">
    <property type="entry name" value="Pyrv_kinase-like_dom_sf"/>
</dbReference>
<dbReference type="NCBIfam" id="TIGR00222">
    <property type="entry name" value="panB"/>
    <property type="match status" value="1"/>
</dbReference>
<dbReference type="NCBIfam" id="NF001452">
    <property type="entry name" value="PRK00311.1"/>
    <property type="match status" value="1"/>
</dbReference>
<dbReference type="PANTHER" id="PTHR20881">
    <property type="entry name" value="3-METHYL-2-OXOBUTANOATE HYDROXYMETHYLTRANSFERASE"/>
    <property type="match status" value="1"/>
</dbReference>
<dbReference type="PANTHER" id="PTHR20881:SF0">
    <property type="entry name" value="3-METHYL-2-OXOBUTANOATE HYDROXYMETHYLTRANSFERASE"/>
    <property type="match status" value="1"/>
</dbReference>
<dbReference type="Pfam" id="PF02548">
    <property type="entry name" value="Pantoate_transf"/>
    <property type="match status" value="1"/>
</dbReference>
<dbReference type="PIRSF" id="PIRSF000388">
    <property type="entry name" value="Pantoate_hydroxy_MeTrfase"/>
    <property type="match status" value="1"/>
</dbReference>
<dbReference type="SUPFAM" id="SSF51621">
    <property type="entry name" value="Phosphoenolpyruvate/pyruvate domain"/>
    <property type="match status" value="1"/>
</dbReference>
<feature type="chain" id="PRO_1000118117" description="3-methyl-2-oxobutanoate hydroxymethyltransferase">
    <location>
        <begin position="1"/>
        <end position="278"/>
    </location>
</feature>
<feature type="active site" description="Proton acceptor" evidence="1">
    <location>
        <position position="181"/>
    </location>
</feature>
<feature type="binding site" evidence="1">
    <location>
        <begin position="43"/>
        <end position="44"/>
    </location>
    <ligand>
        <name>3-methyl-2-oxobutanoate</name>
        <dbReference type="ChEBI" id="CHEBI:11851"/>
    </ligand>
</feature>
<feature type="binding site" evidence="1">
    <location>
        <position position="43"/>
    </location>
    <ligand>
        <name>Mg(2+)</name>
        <dbReference type="ChEBI" id="CHEBI:18420"/>
    </ligand>
</feature>
<feature type="binding site" evidence="1">
    <location>
        <position position="82"/>
    </location>
    <ligand>
        <name>3-methyl-2-oxobutanoate</name>
        <dbReference type="ChEBI" id="CHEBI:11851"/>
    </ligand>
</feature>
<feature type="binding site" evidence="1">
    <location>
        <position position="82"/>
    </location>
    <ligand>
        <name>Mg(2+)</name>
        <dbReference type="ChEBI" id="CHEBI:18420"/>
    </ligand>
</feature>
<feature type="binding site" evidence="1">
    <location>
        <position position="112"/>
    </location>
    <ligand>
        <name>3-methyl-2-oxobutanoate</name>
        <dbReference type="ChEBI" id="CHEBI:11851"/>
    </ligand>
</feature>
<feature type="binding site" evidence="1">
    <location>
        <position position="114"/>
    </location>
    <ligand>
        <name>Mg(2+)</name>
        <dbReference type="ChEBI" id="CHEBI:18420"/>
    </ligand>
</feature>
<sequence length="278" mass="30396">MKTKTDFLKMKEQGEPITMLTAYDYPSAKLAEEAEVDMILVGDSLGMVVLGYDSTVPVTVEDMIHHTKAVRRGAKETFIVTDMPFMSYHVSPQDTMVNARRIVQESGAHALKVEGAGEVISTIHYLTSAGIPVVAHLGLTPQSVGVLGGYKVQGKDAESAKKLIEDAKRCEEAGAIALVLECVPMQLAKFISKQLTIPTIGIGAGQKVDGQVLVYHDLISYGVNRVPKFVKQYTSVQEEIVRGISQYVTEVKTGQFPEEKHSFTMKEEECLALYGGKQ</sequence>
<protein>
    <recommendedName>
        <fullName evidence="1">3-methyl-2-oxobutanoate hydroxymethyltransferase</fullName>
        <ecNumber evidence="1">2.1.2.11</ecNumber>
    </recommendedName>
    <alternativeName>
        <fullName evidence="1">Ketopantoate hydroxymethyltransferase</fullName>
        <shortName evidence="1">KPHMT</shortName>
    </alternativeName>
</protein>
<organism>
    <name type="scientific">Bacillus cereus (strain AH187)</name>
    <dbReference type="NCBI Taxonomy" id="405534"/>
    <lineage>
        <taxon>Bacteria</taxon>
        <taxon>Bacillati</taxon>
        <taxon>Bacillota</taxon>
        <taxon>Bacilli</taxon>
        <taxon>Bacillales</taxon>
        <taxon>Bacillaceae</taxon>
        <taxon>Bacillus</taxon>
        <taxon>Bacillus cereus group</taxon>
    </lineage>
</organism>
<evidence type="ECO:0000255" key="1">
    <source>
        <dbReference type="HAMAP-Rule" id="MF_00156"/>
    </source>
</evidence>
<gene>
    <name evidence="1" type="primary">panB</name>
    <name type="ordered locus">BCAH187_A1706</name>
</gene>
<reference key="1">
    <citation type="submission" date="2008-10" db="EMBL/GenBank/DDBJ databases">
        <title>Genome sequence of Bacillus cereus AH187.</title>
        <authorList>
            <person name="Dodson R.J."/>
            <person name="Durkin A.S."/>
            <person name="Rosovitz M.J."/>
            <person name="Rasko D.A."/>
            <person name="Kolsto A.B."/>
            <person name="Okstad O.A."/>
            <person name="Ravel J."/>
            <person name="Sutton G."/>
        </authorList>
    </citation>
    <scope>NUCLEOTIDE SEQUENCE [LARGE SCALE GENOMIC DNA]</scope>
    <source>
        <strain>AH187</strain>
    </source>
</reference>
<name>PANB_BACC7</name>
<accession>B7HL53</accession>
<keyword id="KW-0963">Cytoplasm</keyword>
<keyword id="KW-0460">Magnesium</keyword>
<keyword id="KW-0479">Metal-binding</keyword>
<keyword id="KW-0566">Pantothenate biosynthesis</keyword>
<keyword id="KW-0808">Transferase</keyword>
<proteinExistence type="inferred from homology"/>
<comment type="function">
    <text evidence="1">Catalyzes the reversible reaction in which hydroxymethyl group from 5,10-methylenetetrahydrofolate is transferred onto alpha-ketoisovalerate to form ketopantoate.</text>
</comment>
<comment type="catalytic activity">
    <reaction evidence="1">
        <text>3-methyl-2-oxobutanoate + (6R)-5,10-methylene-5,6,7,8-tetrahydrofolate + H2O = 2-dehydropantoate + (6S)-5,6,7,8-tetrahydrofolate</text>
        <dbReference type="Rhea" id="RHEA:11824"/>
        <dbReference type="ChEBI" id="CHEBI:11561"/>
        <dbReference type="ChEBI" id="CHEBI:11851"/>
        <dbReference type="ChEBI" id="CHEBI:15377"/>
        <dbReference type="ChEBI" id="CHEBI:15636"/>
        <dbReference type="ChEBI" id="CHEBI:57453"/>
        <dbReference type="EC" id="2.1.2.11"/>
    </reaction>
</comment>
<comment type="cofactor">
    <cofactor evidence="1">
        <name>Mg(2+)</name>
        <dbReference type="ChEBI" id="CHEBI:18420"/>
    </cofactor>
    <text evidence="1">Binds 1 Mg(2+) ion per subunit.</text>
</comment>
<comment type="pathway">
    <text evidence="1">Cofactor biosynthesis; (R)-pantothenate biosynthesis; (R)-pantoate from 3-methyl-2-oxobutanoate: step 1/2.</text>
</comment>
<comment type="subunit">
    <text evidence="1">Homodecamer; pentamer of dimers.</text>
</comment>
<comment type="subcellular location">
    <subcellularLocation>
        <location evidence="1">Cytoplasm</location>
    </subcellularLocation>
</comment>
<comment type="similarity">
    <text evidence="1">Belongs to the PanB family.</text>
</comment>